<name>ICOS_HUMAN</name>
<reference key="1">
    <citation type="journal article" date="1999" name="Nature">
        <title>ICOS is an inducible T-cell co-stimulator structurally and functionally related to CD28.</title>
        <authorList>
            <person name="Hutloff A."/>
            <person name="Dittrich A.M."/>
            <person name="Beier K.C."/>
            <person name="Eljaschewitsch B."/>
            <person name="Kraft R."/>
            <person name="Anagnostopoulos I."/>
            <person name="Kroczek R.A."/>
        </authorList>
    </citation>
    <scope>NUCLEOTIDE SEQUENCE (ISOFORM 1)</scope>
    <scope>PROTEIN SEQUENCE OF 192-198</scope>
    <scope>FUNCTION</scope>
    <scope>SUBUNIT</scope>
    <scope>TISSUE SPECIFICITY</scope>
</reference>
<reference key="2">
    <citation type="journal article" date="2000" name="Biochem. Biophys. Res. Commun.">
        <title>Identification and characterization of rat AILIM/ICOS, a novel T-cell costimulatory molecule, related to the CD28/CTLA4 family.</title>
        <authorList>
            <person name="Tezuka K."/>
            <person name="Tsuji T."/>
            <person name="Hirano D."/>
            <person name="Tamatani T."/>
            <person name="Sakamaki K."/>
            <person name="Kobayashi Y."/>
            <person name="Kamada M."/>
        </authorList>
    </citation>
    <scope>NUCLEOTIDE SEQUENCE (ISOFORM 1)</scope>
    <scope>TISSUE SPECIFICITY</scope>
    <source>
        <tissue>Blood</tissue>
    </source>
</reference>
<reference key="3">
    <citation type="journal article" date="2000" name="J. Immunol.">
        <title>Characterization of human inducible costimulator ligand expression and function.</title>
        <authorList>
            <person name="Aicher A."/>
            <person name="Hayden-Ledbetter M."/>
            <person name="Brady W.A."/>
            <person name="Pezzutto A."/>
            <person name="Richter G."/>
            <person name="Magaletti D."/>
            <person name="Buckwalter S."/>
            <person name="Ledbetter J.A."/>
            <person name="Clark E.A."/>
        </authorList>
    </citation>
    <scope>NUCLEOTIDE SEQUENCE (ISOFORM 1)</scope>
    <source>
        <tissue>Thymus</tissue>
    </source>
</reference>
<reference key="4">
    <citation type="journal article" date="2001" name="Genomics">
        <title>Assembly and annotation of human chromosome 2q33 sequence containing the CD28, CTLA4, and ICOS gene cluster: analysis by computational, comparative, and microarray approaches.</title>
        <authorList>
            <person name="Ling V."/>
            <person name="Wu P.W."/>
            <person name="Finnerty H.F."/>
            <person name="Agostino M.J."/>
            <person name="Graham J.R."/>
            <person name="Chen S."/>
            <person name="Jussiff J.M."/>
            <person name="Fisk G.J."/>
            <person name="Miller C.P."/>
            <person name="Collins M."/>
        </authorList>
    </citation>
    <scope>NUCLEOTIDE SEQUENCE [GENOMIC DNA] (ISOFORM 1)</scope>
</reference>
<reference key="5">
    <citation type="journal article" date="2003" name="Tissue Antigens">
        <title>Allelic variation of the inducible costimulator (ICOS) gene: detection of polymorphisms, analysis of the promoter region, and extended haplotype estimation.</title>
        <authorList>
            <person name="Haaning Andersen A.D."/>
            <person name="Lange M."/>
            <person name="Lillevang S.T."/>
        </authorList>
    </citation>
    <scope>NUCLEOTIDE SEQUENCE (ISOFORM 1)</scope>
</reference>
<reference key="6">
    <citation type="submission" date="2002-11" db="EMBL/GenBank/DDBJ databases">
        <authorList>
            <person name="Todd J.A."/>
        </authorList>
    </citation>
    <scope>NUCLEOTIDE SEQUENCE (ISOFORM 1)</scope>
</reference>
<reference key="7">
    <citation type="journal article" date="2004" name="Genome Res.">
        <title>The status, quality, and expansion of the NIH full-length cDNA project: the Mammalian Gene Collection (MGC).</title>
        <authorList>
            <consortium name="The MGC Project Team"/>
        </authorList>
    </citation>
    <scope>NUCLEOTIDE SEQUENCE [LARGE SCALE MRNA] (ISOFORMS 1 AND 2)</scope>
    <source>
        <tissue>Blood</tissue>
    </source>
</reference>
<reference key="8">
    <citation type="journal article" date="2000" name="Eur. J. Immunol.">
        <title>Induction, binding specificity and function of human ICOS.</title>
        <authorList>
            <person name="Beier K.C."/>
            <person name="Hutloff A."/>
            <person name="Dittrich A.M."/>
            <person name="Heuck C."/>
            <person name="Rauch A."/>
            <person name="Buechner K."/>
            <person name="Ludewig B."/>
            <person name="Ochs H.D."/>
            <person name="Mages H.W."/>
            <person name="Kroczek R.A."/>
        </authorList>
    </citation>
    <scope>FUNCTION</scope>
    <scope>GLYCOSYLATION</scope>
    <scope>SUBUNIT</scope>
    <scope>INDUCTION</scope>
    <scope>TISSUE SPECIFICITY</scope>
</reference>
<reference key="9">
    <citation type="journal article" date="2003" name="Nat. Immunol.">
        <title>Homozygous loss of ICOS is associated with adult-onset common variable immunodeficiency.</title>
        <authorList>
            <person name="Grimbacher B."/>
            <person name="Hutloff A."/>
            <person name="Schlesier M."/>
            <person name="Glocker E."/>
            <person name="Warnatz K."/>
            <person name="Draeger R."/>
            <person name="Eibel H."/>
            <person name="Fischer B."/>
            <person name="Schaeffer A.A."/>
            <person name="Mages H.W."/>
            <person name="Kroczek R.A."/>
            <person name="Peter H.H."/>
        </authorList>
    </citation>
    <scope>INVOLVEMENT IN CVID1</scope>
</reference>
<reference key="10">
    <citation type="journal article" date="2016" name="Nat. Immunol.">
        <title>A TRAF-like motif of the inducible costimulator ICOS controls development of germinal center TFH cells via the kinase TBK1.</title>
        <authorList>
            <person name="Pedros C."/>
            <person name="Zhang Y."/>
            <person name="Hu J.K."/>
            <person name="Choi Y.S."/>
            <person name="Canonigo-Balancio A.J."/>
            <person name="Yates J.R. III"/>
            <person name="Altman A."/>
            <person name="Crotty S."/>
            <person name="Kong K.F."/>
        </authorList>
    </citation>
    <scope>FUNCTION</scope>
    <scope>INTERACTION WITH TBK1</scope>
</reference>
<reference key="11">
    <citation type="journal article" date="2020" name="Cell. Mol. Immunol.">
        <title>Transmembrane domain-mediated Lck association underlies bystander and costimulatory ICOS signaling.</title>
        <authorList>
            <person name="Wan Z."/>
            <person name="Shao X."/>
            <person name="Ji X."/>
            <person name="Dong L."/>
            <person name="Wei J."/>
            <person name="Xiong Z."/>
            <person name="Liu W."/>
            <person name="Qi H."/>
        </authorList>
    </citation>
    <scope>FUNCTION</scope>
    <scope>INTERACTION WITH PIK3R1</scope>
    <scope>SUBCELLULAR LOCATION</scope>
</reference>
<reference evidence="12 13" key="12">
    <citation type="journal article" date="2020" name="Nat. Commun.">
        <title>Structural characterization of the ICOS/ICOS-L immune complex reveals high molecular mimicry by therapeutic antibodies.</title>
        <authorList>
            <person name="Rujas E."/>
            <person name="Cui H."/>
            <person name="Sicard T."/>
            <person name="Semesi A."/>
            <person name="Julien J.P."/>
        </authorList>
    </citation>
    <scope>X-RAY CRYSTALLOGRAPHY (2.40 ANGSTROMS) OF 19-138</scope>
    <scope>GLYCOSYLATION AT ASN-89 AND ASN-110</scope>
    <scope>DISULFIDE BONDS</scope>
    <scope>INTERACTION WITH ICOSLG</scope>
    <scope>FUNCTION</scope>
    <scope>MUTAGENESIS OF ASN-110</scope>
</reference>
<dbReference type="EMBL" id="AJ277832">
    <property type="protein sequence ID" value="CAC06612.1"/>
    <property type="molecule type" value="mRNA"/>
</dbReference>
<dbReference type="EMBL" id="AB023135">
    <property type="protein sequence ID" value="BAA82129.1"/>
    <property type="molecule type" value="mRNA"/>
</dbReference>
<dbReference type="EMBL" id="AF218312">
    <property type="protein sequence ID" value="AAF71301.1"/>
    <property type="molecule type" value="mRNA"/>
</dbReference>
<dbReference type="EMBL" id="AF411058">
    <property type="protein sequence ID" value="AAL40933.1"/>
    <property type="molecule type" value="Genomic_DNA"/>
</dbReference>
<dbReference type="EMBL" id="AF411059">
    <property type="protein sequence ID" value="AAL40934.1"/>
    <property type="molecule type" value="Genomic_DNA"/>
</dbReference>
<dbReference type="EMBL" id="AF488347">
    <property type="protein sequence ID" value="AAM00909.1"/>
    <property type="molecule type" value="Genomic_DNA"/>
</dbReference>
<dbReference type="EMBL" id="AF488346">
    <property type="protein sequence ID" value="AAM00909.1"/>
    <property type="status" value="JOINED"/>
    <property type="molecule type" value="Genomic_DNA"/>
</dbReference>
<dbReference type="EMBL" id="AJ535718">
    <property type="protein sequence ID" value="CAD59742.1"/>
    <property type="molecule type" value="Genomic_DNA"/>
</dbReference>
<dbReference type="EMBL" id="BC028006">
    <property type="protein sequence ID" value="AAH28006.1"/>
    <property type="molecule type" value="mRNA"/>
</dbReference>
<dbReference type="EMBL" id="BC028210">
    <property type="protein sequence ID" value="AAH28210.1"/>
    <property type="molecule type" value="mRNA"/>
</dbReference>
<dbReference type="CCDS" id="CCDS2363.1">
    <molecule id="Q9Y6W8-1"/>
</dbReference>
<dbReference type="PIR" id="S78540">
    <property type="entry name" value="S78540"/>
</dbReference>
<dbReference type="RefSeq" id="NP_036224.1">
    <molecule id="Q9Y6W8-1"/>
    <property type="nucleotide sequence ID" value="NM_012092.4"/>
</dbReference>
<dbReference type="PDB" id="6X4G">
    <property type="method" value="X-ray"/>
    <property type="resolution" value="3.50 A"/>
    <property type="chains" value="A=19-129"/>
</dbReference>
<dbReference type="PDB" id="7JOO">
    <property type="method" value="X-ray"/>
    <property type="resolution" value="2.40 A"/>
    <property type="chains" value="C=19-138"/>
</dbReference>
<dbReference type="PDBsum" id="6X4G"/>
<dbReference type="PDBsum" id="7JOO"/>
<dbReference type="SMR" id="Q9Y6W8"/>
<dbReference type="BioGRID" id="118933">
    <property type="interactions" value="29"/>
</dbReference>
<dbReference type="FunCoup" id="Q9Y6W8">
    <property type="interactions" value="527"/>
</dbReference>
<dbReference type="IntAct" id="Q9Y6W8">
    <property type="interactions" value="20"/>
</dbReference>
<dbReference type="STRING" id="9606.ENSP00000319476"/>
<dbReference type="ChEMBL" id="CHEMBL3712953"/>
<dbReference type="GuidetoPHARMACOLOGY" id="2939"/>
<dbReference type="GlyCosmos" id="Q9Y6W8">
    <property type="glycosylation" value="3 sites, No reported glycans"/>
</dbReference>
<dbReference type="GlyGen" id="Q9Y6W8">
    <property type="glycosylation" value="3 sites"/>
</dbReference>
<dbReference type="iPTMnet" id="Q9Y6W8"/>
<dbReference type="PhosphoSitePlus" id="Q9Y6W8"/>
<dbReference type="BioMuta" id="ICOS"/>
<dbReference type="DMDM" id="50400701"/>
<dbReference type="MassIVE" id="Q9Y6W8"/>
<dbReference type="PaxDb" id="9606-ENSP00000319476"/>
<dbReference type="PeptideAtlas" id="Q9Y6W8"/>
<dbReference type="ProteomicsDB" id="86805">
    <molecule id="Q9Y6W8-1"/>
</dbReference>
<dbReference type="ProteomicsDB" id="86806">
    <molecule id="Q9Y6W8-2"/>
</dbReference>
<dbReference type="ABCD" id="Q9Y6W8">
    <property type="antibodies" value="2 sequenced antibodies"/>
</dbReference>
<dbReference type="Antibodypedia" id="34168">
    <property type="antibodies" value="1133 antibodies from 44 providers"/>
</dbReference>
<dbReference type="DNASU" id="29851"/>
<dbReference type="Ensembl" id="ENST00000316386.11">
    <molecule id="Q9Y6W8-1"/>
    <property type="protein sequence ID" value="ENSP00000319476.6"/>
    <property type="gene ID" value="ENSG00000163600.13"/>
</dbReference>
<dbReference type="Ensembl" id="ENST00000435193.1">
    <molecule id="Q9Y6W8-2"/>
    <property type="protein sequence ID" value="ENSP00000415951.1"/>
    <property type="gene ID" value="ENSG00000163600.13"/>
</dbReference>
<dbReference type="GeneID" id="29851"/>
<dbReference type="KEGG" id="hsa:29851"/>
<dbReference type="MANE-Select" id="ENST00000316386.11">
    <property type="protein sequence ID" value="ENSP00000319476.6"/>
    <property type="RefSeq nucleotide sequence ID" value="NM_012092.4"/>
    <property type="RefSeq protein sequence ID" value="NP_036224.1"/>
</dbReference>
<dbReference type="UCSC" id="uc002vam.4">
    <molecule id="Q9Y6W8-1"/>
    <property type="organism name" value="human"/>
</dbReference>
<dbReference type="AGR" id="HGNC:5351"/>
<dbReference type="CTD" id="29851"/>
<dbReference type="DisGeNET" id="29851"/>
<dbReference type="GeneCards" id="ICOS"/>
<dbReference type="HGNC" id="HGNC:5351">
    <property type="gene designation" value="ICOS"/>
</dbReference>
<dbReference type="HPA" id="ENSG00000163600">
    <property type="expression patterns" value="Group enriched (bone marrow, lymphoid tissue)"/>
</dbReference>
<dbReference type="MalaCards" id="ICOS"/>
<dbReference type="MIM" id="604558">
    <property type="type" value="gene"/>
</dbReference>
<dbReference type="MIM" id="607594">
    <property type="type" value="phenotype"/>
</dbReference>
<dbReference type="neXtProt" id="NX_Q9Y6W8"/>
<dbReference type="OpenTargets" id="ENSG00000163600"/>
<dbReference type="Orphanet" id="1572">
    <property type="disease" value="Common variable immunodeficiency"/>
</dbReference>
<dbReference type="PharmGKB" id="PA29599"/>
<dbReference type="VEuPathDB" id="HostDB:ENSG00000163600"/>
<dbReference type="eggNOG" id="ENOG502S59F">
    <property type="taxonomic scope" value="Eukaryota"/>
</dbReference>
<dbReference type="GeneTree" id="ENSGT00390000000801"/>
<dbReference type="HOGENOM" id="CLU_1315009_0_0_1"/>
<dbReference type="InParanoid" id="Q9Y6W8"/>
<dbReference type="OMA" id="QDKEDCF"/>
<dbReference type="OrthoDB" id="9403189at2759"/>
<dbReference type="PAN-GO" id="Q9Y6W8">
    <property type="GO annotations" value="3 GO annotations based on evolutionary models"/>
</dbReference>
<dbReference type="PhylomeDB" id="Q9Y6W8"/>
<dbReference type="TreeFam" id="TF335679"/>
<dbReference type="PathwayCommons" id="Q9Y6W8"/>
<dbReference type="Reactome" id="R-HSA-1257604">
    <molecule id="Q9Y6W8-1"/>
    <property type="pathway name" value="PIP3 activates AKT signaling"/>
</dbReference>
<dbReference type="Reactome" id="R-HSA-2219530">
    <molecule id="Q9Y6W8-1"/>
    <property type="pathway name" value="Constitutive Signaling by Aberrant PI3K in Cancer"/>
</dbReference>
<dbReference type="Reactome" id="R-HSA-6811558">
    <molecule id="Q9Y6W8-1"/>
    <property type="pathway name" value="PI5P, PP2A and IER3 Regulate PI3K/AKT Signaling"/>
</dbReference>
<dbReference type="Reactome" id="R-HSA-9725371">
    <property type="pathway name" value="Nuclear events stimulated by ALK signaling in cancer"/>
</dbReference>
<dbReference type="Reactome" id="R-HSA-9927354">
    <molecule id="Q9Y6W8-1"/>
    <property type="pathway name" value="Co-stimulation by ICOS"/>
</dbReference>
<dbReference type="SignaLink" id="Q9Y6W8"/>
<dbReference type="SIGNOR" id="Q9Y6W8"/>
<dbReference type="BioGRID-ORCS" id="29851">
    <property type="hits" value="18 hits in 1137 CRISPR screens"/>
</dbReference>
<dbReference type="ChiTaRS" id="ICOS">
    <property type="organism name" value="human"/>
</dbReference>
<dbReference type="GeneWiki" id="CD278"/>
<dbReference type="GenomeRNAi" id="29851"/>
<dbReference type="Pharos" id="Q9Y6W8">
    <property type="development level" value="Tbio"/>
</dbReference>
<dbReference type="PRO" id="PR:Q9Y6W8"/>
<dbReference type="Proteomes" id="UP000005640">
    <property type="component" value="Chromosome 2"/>
</dbReference>
<dbReference type="RNAct" id="Q9Y6W8">
    <property type="molecule type" value="protein"/>
</dbReference>
<dbReference type="Bgee" id="ENSG00000163600">
    <property type="expression patterns" value="Expressed in lymph node and 76 other cell types or tissues"/>
</dbReference>
<dbReference type="ExpressionAtlas" id="Q9Y6W8">
    <property type="expression patterns" value="baseline and differential"/>
</dbReference>
<dbReference type="GO" id="GO:0005576">
    <property type="term" value="C:extracellular region"/>
    <property type="evidence" value="ECO:0007669"/>
    <property type="project" value="UniProtKB-SubCell"/>
</dbReference>
<dbReference type="GO" id="GO:0005886">
    <property type="term" value="C:plasma membrane"/>
    <property type="evidence" value="ECO:0000314"/>
    <property type="project" value="UniProt"/>
</dbReference>
<dbReference type="GO" id="GO:0038023">
    <property type="term" value="F:signaling receptor activity"/>
    <property type="evidence" value="ECO:0000314"/>
    <property type="project" value="UniProt"/>
</dbReference>
<dbReference type="GO" id="GO:0098609">
    <property type="term" value="P:cell-cell adhesion"/>
    <property type="evidence" value="ECO:0000318"/>
    <property type="project" value="GO_Central"/>
</dbReference>
<dbReference type="GO" id="GO:0006955">
    <property type="term" value="P:immune response"/>
    <property type="evidence" value="ECO:0000303"/>
    <property type="project" value="UniProtKB"/>
</dbReference>
<dbReference type="GO" id="GO:0031295">
    <property type="term" value="P:T cell costimulation"/>
    <property type="evidence" value="ECO:0000318"/>
    <property type="project" value="GO_Central"/>
</dbReference>
<dbReference type="GO" id="GO:0002517">
    <property type="term" value="P:T cell tolerance induction"/>
    <property type="evidence" value="ECO:0000318"/>
    <property type="project" value="GO_Central"/>
</dbReference>
<dbReference type="GO" id="GO:0061470">
    <property type="term" value="P:T follicular helper cell differentiation"/>
    <property type="evidence" value="ECO:0000314"/>
    <property type="project" value="UniProt"/>
</dbReference>
<dbReference type="FunFam" id="2.60.40.10:FF:000874">
    <property type="entry name" value="Inducible T-cell costimulator"/>
    <property type="match status" value="1"/>
</dbReference>
<dbReference type="Gene3D" id="2.60.40.10">
    <property type="entry name" value="Immunoglobulins"/>
    <property type="match status" value="1"/>
</dbReference>
<dbReference type="InterPro" id="IPR039943">
    <property type="entry name" value="ICOS"/>
</dbReference>
<dbReference type="InterPro" id="IPR013783">
    <property type="entry name" value="Ig-like_fold"/>
</dbReference>
<dbReference type="InterPro" id="IPR013106">
    <property type="entry name" value="Ig_V-set"/>
</dbReference>
<dbReference type="PANTHER" id="PTHR20904:SF0">
    <property type="entry name" value="INDUCIBLE T-CELL COSTIMULATOR"/>
    <property type="match status" value="1"/>
</dbReference>
<dbReference type="PANTHER" id="PTHR20904">
    <property type="entry name" value="INDUCIBLE T-CELL COSTIMULATOR ICOS"/>
    <property type="match status" value="1"/>
</dbReference>
<dbReference type="Pfam" id="PF15910">
    <property type="entry name" value="V-set_2"/>
    <property type="match status" value="1"/>
</dbReference>
<proteinExistence type="evidence at protein level"/>
<evidence type="ECO:0000250" key="1">
    <source>
        <dbReference type="UniProtKB" id="Q9WVS0"/>
    </source>
</evidence>
<evidence type="ECO:0000255" key="2"/>
<evidence type="ECO:0000269" key="3">
    <source>
    </source>
</evidence>
<evidence type="ECO:0000269" key="4">
    <source>
    </source>
</evidence>
<evidence type="ECO:0000269" key="5">
    <source>
    </source>
</evidence>
<evidence type="ECO:0000269" key="6">
    <source>
    </source>
</evidence>
<evidence type="ECO:0000269" key="7">
    <source>
    </source>
</evidence>
<evidence type="ECO:0000269" key="8">
    <source>
    </source>
</evidence>
<evidence type="ECO:0000269" key="9">
    <source>
    </source>
</evidence>
<evidence type="ECO:0000303" key="10">
    <source>
    </source>
</evidence>
<evidence type="ECO:0000305" key="11"/>
<evidence type="ECO:0007744" key="12">
    <source>
        <dbReference type="PDB" id="6X4G"/>
    </source>
</evidence>
<evidence type="ECO:0007744" key="13">
    <source>
        <dbReference type="PDB" id="7JOO"/>
    </source>
</evidence>
<evidence type="ECO:0007829" key="14">
    <source>
        <dbReference type="PDB" id="7JOO"/>
    </source>
</evidence>
<sequence length="199" mass="22625">MKSGLWYFFLFCLRIKVLTGEINGSANYEMFIFHNGGVQILCKYPDIVQQFKMQLLKGGQILCDLTKTKGSGNTVSIKSLKFCHSQLSNNSVSFFLYNLDHSHANYYFCNLSIFDPPPFKVTLTGGYLHIYESQLCCQLKFWLPIGCAAFVVVCILGCILICWLTKKKYSSSVHDPNGEYMFMRAVNTAKKSRLTDVTL</sequence>
<keyword id="KW-0002">3D-structure</keyword>
<keyword id="KW-0025">Alternative splicing</keyword>
<keyword id="KW-1003">Cell membrane</keyword>
<keyword id="KW-0903">Direct protein sequencing</keyword>
<keyword id="KW-1015">Disulfide bond</keyword>
<keyword id="KW-0325">Glycoprotein</keyword>
<keyword id="KW-0393">Immunoglobulin domain</keyword>
<keyword id="KW-0472">Membrane</keyword>
<keyword id="KW-1267">Proteomics identification</keyword>
<keyword id="KW-1185">Reference proteome</keyword>
<keyword id="KW-0964">Secreted</keyword>
<keyword id="KW-0732">Signal</keyword>
<keyword id="KW-0812">Transmembrane</keyword>
<keyword id="KW-1133">Transmembrane helix</keyword>
<protein>
    <recommendedName>
        <fullName>Inducible T-cell costimulator</fullName>
    </recommendedName>
    <alternativeName>
        <fullName>Activation-inducible lymphocyte immunomediatory molecule</fullName>
    </alternativeName>
    <cdAntigenName>CD278</cdAntigenName>
</protein>
<organism>
    <name type="scientific">Homo sapiens</name>
    <name type="common">Human</name>
    <dbReference type="NCBI Taxonomy" id="9606"/>
    <lineage>
        <taxon>Eukaryota</taxon>
        <taxon>Metazoa</taxon>
        <taxon>Chordata</taxon>
        <taxon>Craniata</taxon>
        <taxon>Vertebrata</taxon>
        <taxon>Euteleostomi</taxon>
        <taxon>Mammalia</taxon>
        <taxon>Eutheria</taxon>
        <taxon>Euarchontoglires</taxon>
        <taxon>Primates</taxon>
        <taxon>Haplorrhini</taxon>
        <taxon>Catarrhini</taxon>
        <taxon>Hominidae</taxon>
        <taxon>Homo</taxon>
    </lineage>
</organism>
<feature type="signal peptide" evidence="2">
    <location>
        <begin position="1"/>
        <end position="20"/>
    </location>
</feature>
<feature type="chain" id="PRO_0000014806" description="Inducible T-cell costimulator">
    <location>
        <begin position="21"/>
        <end position="199"/>
    </location>
</feature>
<feature type="topological domain" description="Extracellular" evidence="2">
    <location>
        <begin position="21"/>
        <end position="140"/>
    </location>
</feature>
<feature type="transmembrane region" description="Helical" evidence="2">
    <location>
        <begin position="141"/>
        <end position="161"/>
    </location>
</feature>
<feature type="topological domain" description="Cytoplasmic" evidence="2">
    <location>
        <begin position="162"/>
        <end position="199"/>
    </location>
</feature>
<feature type="domain" description="Ig-like V-type">
    <location>
        <begin position="30"/>
        <end position="132"/>
    </location>
</feature>
<feature type="glycosylation site" description="N-linked (GlcNAc...) asparagine" evidence="8 12">
    <location>
        <position position="89"/>
    </location>
</feature>
<feature type="glycosylation site" description="N-linked (GlcNAc...) asparagine" evidence="8 13">
    <location>
        <position position="110"/>
    </location>
</feature>
<feature type="disulfide bond" evidence="8 12 13">
    <location>
        <begin position="42"/>
        <end position="109"/>
    </location>
</feature>
<feature type="disulfide bond" evidence="8 12 13">
    <location>
        <begin position="63"/>
        <end position="83"/>
    </location>
</feature>
<feature type="splice variant" id="VSP_010788" description="In isoform 2." evidence="10">
    <original>KYSSSVHDPNGEYMFMRAVNTAKKSRLTDVTL</original>
    <variation>M</variation>
    <location>
        <begin position="168"/>
        <end position="199"/>
    </location>
</feature>
<feature type="mutagenesis site" description="About 4.3-fold improvement in binding affinity to ICOSLG." evidence="8">
    <original>N</original>
    <variation>Q</variation>
    <location>
        <position position="110"/>
    </location>
</feature>
<feature type="strand" evidence="14">
    <location>
        <begin position="31"/>
        <end position="33"/>
    </location>
</feature>
<feature type="strand" evidence="14">
    <location>
        <begin position="35"/>
        <end position="43"/>
    </location>
</feature>
<feature type="strand" evidence="14">
    <location>
        <begin position="50"/>
        <end position="57"/>
    </location>
</feature>
<feature type="strand" evidence="14">
    <location>
        <begin position="60"/>
        <end position="69"/>
    </location>
</feature>
<feature type="strand" evidence="14">
    <location>
        <begin position="75"/>
        <end position="78"/>
    </location>
</feature>
<feature type="strand" evidence="14">
    <location>
        <begin position="84"/>
        <end position="87"/>
    </location>
</feature>
<feature type="strand" evidence="14">
    <location>
        <begin position="89"/>
        <end position="96"/>
    </location>
</feature>
<feature type="helix" evidence="14">
    <location>
        <begin position="101"/>
        <end position="103"/>
    </location>
</feature>
<feature type="strand" evidence="14">
    <location>
        <begin position="106"/>
        <end position="118"/>
    </location>
</feature>
<feature type="strand" evidence="14">
    <location>
        <begin position="120"/>
        <end position="127"/>
    </location>
</feature>
<gene>
    <name type="primary">ICOS</name>
    <name type="synonym">AILIM</name>
</gene>
<comment type="function">
    <text evidence="1 6 7 8 9">Stimulatory receptor expressed in activated or antigen-experienced T-cells that plays an important role in the immune response (PubMed:9930702). Upon binding to its ligand ICOSL expressed on antigen presenting cells (APCs), delivers costimulatory signals that enhances all basic T-cell responses to a foreign antigen, namely proliferation, secretion of lymphokines including IL10, up-regulation of molecules that mediate cell-cell interaction, and effective help for antibody secretion by B-cells (PubMed:33033255). Also acts as a costimulatory receptor critical for the differentiation of T follicular regulatory cells upon immune challenges such as viral infection (PubMed:27135603). Mechanistically, potentiates TCR-induced calcium flux by augmenting PLCG1 activation and actin remodeling (By similarity). In addition, activates PI3K signaling pathways independently of calcium flux (PubMed:30523347). Essential both for efficient interaction between T and B-cells and for normal antibody responses to T-cell dependent antigens. Prevents the apoptosis of pre-activated T-cells. Plays a critical role in CD40-mediated class switching of immunoglobin isotypes (By similarity).</text>
</comment>
<comment type="subunit">
    <text evidence="4 6 7 8 9">Homodimer; disulfide-linked. Interacts with ICOSLG (PubMed:33033255). Interacts with PIK3R1 (PubMed:30523347). Interacts with TBK1; this interaction is critical for the maturation of T follicular regulatory cells (PubMed:27135603).</text>
</comment>
<comment type="interaction">
    <interactant intactId="EBI-3922712">
        <id>Q9Y6W8</id>
    </interactant>
    <interactant intactId="EBI-12923856">
        <id>O75144</id>
        <label>ICOSLG</label>
    </interactant>
    <organismsDiffer>false</organismsDiffer>
    <experiments>8</experiments>
</comment>
<comment type="interaction">
    <interactant intactId="EBI-3922712">
        <id>Q9Y6W8</id>
    </interactant>
    <interactant intactId="EBI-79464">
        <id>P27986</id>
        <label>PIK3R1</label>
    </interactant>
    <organismsDiffer>false</organismsDiffer>
    <experiments>5</experiments>
</comment>
<comment type="interaction">
    <interactant intactId="EBI-3922712">
        <id>Q9Y6W8</id>
    </interactant>
    <interactant intactId="EBI-356402">
        <id>Q9UHD2</id>
        <label>TBK1</label>
    </interactant>
    <organismsDiffer>false</organismsDiffer>
    <experiments>5</experiments>
</comment>
<comment type="subcellular location">
    <molecule>Isoform 1</molecule>
    <subcellularLocation>
        <location evidence="7">Cell membrane</location>
        <topology evidence="11">Single-pass type I membrane protein</topology>
    </subcellularLocation>
</comment>
<comment type="subcellular location">
    <molecule>Isoform 2</molecule>
    <subcellularLocation>
        <location evidence="11">Secreted</location>
    </subcellularLocation>
</comment>
<comment type="alternative products">
    <event type="alternative splicing"/>
    <isoform>
        <id>Q9Y6W8-1</id>
        <name>1</name>
        <sequence type="displayed"/>
    </isoform>
    <isoform>
        <id>Q9Y6W8-2</id>
        <name>2</name>
        <sequence type="described" ref="VSP_010788"/>
    </isoform>
</comment>
<comment type="tissue specificity">
    <text evidence="3 4 9">Activated T-cells. Highly expressed on tonsillar T-cells, which are closely associated with B-cells in the apical light zone of germinal centers, the site of terminal B-cell maturation. Expressed at lower levels in thymus, lung, lymph node and peripheral blood leukocytes. Expressed in the medulla of fetal and newborn thymus.</text>
</comment>
<comment type="induction">
    <text evidence="4">By phorbol myristate acetate (PMA) and ionomycin. Up-regulated early on T-cells and continues to be expressed into the later phases of T-cell activation.</text>
</comment>
<comment type="PTM">
    <text evidence="4">N-glycosylated.</text>
</comment>
<comment type="disease" evidence="5">
    <disease id="DI-01805">
        <name>Immunodeficiency, common variable, 1</name>
        <acronym>CVID1</acronym>
        <description>A primary immunodeficiency characterized by antibody deficiency, hypogammaglobulinemia, recurrent bacterial infections and an inability to mount an antibody response to antigen. The defect results from a failure of B-cell differentiation and impaired secretion of immunoglobulins; the numbers of circulating B-cells is usually in the normal range, but can be low.</description>
        <dbReference type="MIM" id="607594"/>
    </disease>
    <text>The disease is caused by variants affecting the gene represented in this entry.</text>
</comment>
<comment type="online information" name="ICOSbase">
    <link uri="https://databases.lovd.nl/shared/genes/ICOS"/>
    <text>ICOS mutation db</text>
</comment>
<accession>Q9Y6W8</accession>
<accession>Q8N6W8</accession>